<organism>
    <name type="scientific">Synechococcus sp. (strain CC9902)</name>
    <dbReference type="NCBI Taxonomy" id="316279"/>
    <lineage>
        <taxon>Bacteria</taxon>
        <taxon>Bacillati</taxon>
        <taxon>Cyanobacteriota</taxon>
        <taxon>Cyanophyceae</taxon>
        <taxon>Synechococcales</taxon>
        <taxon>Synechococcaceae</taxon>
        <taxon>Synechococcus</taxon>
    </lineage>
</organism>
<gene>
    <name evidence="1" type="primary">dapA</name>
    <name type="ordered locus">Syncc9902_0065</name>
</gene>
<dbReference type="EC" id="4.3.3.7" evidence="1"/>
<dbReference type="EMBL" id="CP000097">
    <property type="protein sequence ID" value="ABB25040.1"/>
    <property type="molecule type" value="Genomic_DNA"/>
</dbReference>
<dbReference type="RefSeq" id="WP_011358907.1">
    <property type="nucleotide sequence ID" value="NC_007513.1"/>
</dbReference>
<dbReference type="SMR" id="Q3B0T8"/>
<dbReference type="STRING" id="316279.Syncc9902_0065"/>
<dbReference type="KEGG" id="sye:Syncc9902_0065"/>
<dbReference type="eggNOG" id="COG0329">
    <property type="taxonomic scope" value="Bacteria"/>
</dbReference>
<dbReference type="HOGENOM" id="CLU_049343_7_1_3"/>
<dbReference type="OrthoDB" id="9782828at2"/>
<dbReference type="UniPathway" id="UPA00034">
    <property type="reaction ID" value="UER00017"/>
</dbReference>
<dbReference type="Proteomes" id="UP000002712">
    <property type="component" value="Chromosome"/>
</dbReference>
<dbReference type="GO" id="GO:0005829">
    <property type="term" value="C:cytosol"/>
    <property type="evidence" value="ECO:0007669"/>
    <property type="project" value="TreeGrafter"/>
</dbReference>
<dbReference type="GO" id="GO:0008840">
    <property type="term" value="F:4-hydroxy-tetrahydrodipicolinate synthase activity"/>
    <property type="evidence" value="ECO:0007669"/>
    <property type="project" value="UniProtKB-UniRule"/>
</dbReference>
<dbReference type="GO" id="GO:0019877">
    <property type="term" value="P:diaminopimelate biosynthetic process"/>
    <property type="evidence" value="ECO:0007669"/>
    <property type="project" value="UniProtKB-UniRule"/>
</dbReference>
<dbReference type="GO" id="GO:0009089">
    <property type="term" value="P:lysine biosynthetic process via diaminopimelate"/>
    <property type="evidence" value="ECO:0007669"/>
    <property type="project" value="UniProtKB-UniRule"/>
</dbReference>
<dbReference type="CDD" id="cd00950">
    <property type="entry name" value="DHDPS"/>
    <property type="match status" value="1"/>
</dbReference>
<dbReference type="Gene3D" id="3.20.20.70">
    <property type="entry name" value="Aldolase class I"/>
    <property type="match status" value="1"/>
</dbReference>
<dbReference type="HAMAP" id="MF_00418">
    <property type="entry name" value="DapA"/>
    <property type="match status" value="1"/>
</dbReference>
<dbReference type="InterPro" id="IPR013785">
    <property type="entry name" value="Aldolase_TIM"/>
</dbReference>
<dbReference type="InterPro" id="IPR005263">
    <property type="entry name" value="DapA"/>
</dbReference>
<dbReference type="InterPro" id="IPR002220">
    <property type="entry name" value="DapA-like"/>
</dbReference>
<dbReference type="InterPro" id="IPR020625">
    <property type="entry name" value="Schiff_base-form_aldolases_AS"/>
</dbReference>
<dbReference type="InterPro" id="IPR020624">
    <property type="entry name" value="Schiff_base-form_aldolases_CS"/>
</dbReference>
<dbReference type="NCBIfam" id="TIGR00674">
    <property type="entry name" value="dapA"/>
    <property type="match status" value="1"/>
</dbReference>
<dbReference type="PANTHER" id="PTHR12128:SF66">
    <property type="entry name" value="4-HYDROXY-2-OXOGLUTARATE ALDOLASE, MITOCHONDRIAL"/>
    <property type="match status" value="1"/>
</dbReference>
<dbReference type="PANTHER" id="PTHR12128">
    <property type="entry name" value="DIHYDRODIPICOLINATE SYNTHASE"/>
    <property type="match status" value="1"/>
</dbReference>
<dbReference type="Pfam" id="PF00701">
    <property type="entry name" value="DHDPS"/>
    <property type="match status" value="1"/>
</dbReference>
<dbReference type="PIRSF" id="PIRSF001365">
    <property type="entry name" value="DHDPS"/>
    <property type="match status" value="1"/>
</dbReference>
<dbReference type="PRINTS" id="PR00146">
    <property type="entry name" value="DHPICSNTHASE"/>
</dbReference>
<dbReference type="SMART" id="SM01130">
    <property type="entry name" value="DHDPS"/>
    <property type="match status" value="1"/>
</dbReference>
<dbReference type="SUPFAM" id="SSF51569">
    <property type="entry name" value="Aldolase"/>
    <property type="match status" value="1"/>
</dbReference>
<dbReference type="PROSITE" id="PS00665">
    <property type="entry name" value="DHDPS_1"/>
    <property type="match status" value="1"/>
</dbReference>
<dbReference type="PROSITE" id="PS00666">
    <property type="entry name" value="DHDPS_2"/>
    <property type="match status" value="1"/>
</dbReference>
<proteinExistence type="inferred from homology"/>
<sequence length="302" mass="31320">MTLSASLSPQPFGRIVTAMVTPFDSSGAVDFQLAARLARHLVEQGSDGLLVCGTTGESPTLSWDEQLKLLEAVREAVGSSAQVLAGTGSNSTSEAVKATREAAAVGADGALVVVPYYNKPPQEGLEVHFRAIAEAAPTLPLMLYNIPGRTGCHIEAETVACLMDCPNIVSFKAASGTTEEVTALRLACGSRLAIYSGDDGLTLPMLSVGAVGVVSVASHVAGPQIRAMIDAYVEGEVGAALAQHEQLIPLFKALFATTNPIPVKAALEINGWSVGAPRPPLSSLPEAMRTTLSNTLSALRQT</sequence>
<accession>Q3B0T8</accession>
<protein>
    <recommendedName>
        <fullName evidence="1">4-hydroxy-tetrahydrodipicolinate synthase</fullName>
        <shortName evidence="1">HTPA synthase</shortName>
        <ecNumber evidence="1">4.3.3.7</ecNumber>
    </recommendedName>
</protein>
<comment type="function">
    <text evidence="1">Catalyzes the condensation of (S)-aspartate-beta-semialdehyde [(S)-ASA] and pyruvate to 4-hydroxy-tetrahydrodipicolinate (HTPA).</text>
</comment>
<comment type="catalytic activity">
    <reaction evidence="1">
        <text>L-aspartate 4-semialdehyde + pyruvate = (2S,4S)-4-hydroxy-2,3,4,5-tetrahydrodipicolinate + H2O + H(+)</text>
        <dbReference type="Rhea" id="RHEA:34171"/>
        <dbReference type="ChEBI" id="CHEBI:15361"/>
        <dbReference type="ChEBI" id="CHEBI:15377"/>
        <dbReference type="ChEBI" id="CHEBI:15378"/>
        <dbReference type="ChEBI" id="CHEBI:67139"/>
        <dbReference type="ChEBI" id="CHEBI:537519"/>
        <dbReference type="EC" id="4.3.3.7"/>
    </reaction>
</comment>
<comment type="pathway">
    <text evidence="1">Amino-acid biosynthesis; L-lysine biosynthesis via DAP pathway; (S)-tetrahydrodipicolinate from L-aspartate: step 3/4.</text>
</comment>
<comment type="subunit">
    <text evidence="1">Homotetramer; dimer of dimers.</text>
</comment>
<comment type="subcellular location">
    <subcellularLocation>
        <location evidence="1">Cytoplasm</location>
    </subcellularLocation>
</comment>
<comment type="similarity">
    <text evidence="1">Belongs to the DapA family.</text>
</comment>
<comment type="caution">
    <text evidence="2">Was originally thought to be a dihydrodipicolinate synthase (DHDPS), catalyzing the condensation of (S)-aspartate-beta-semialdehyde [(S)-ASA] and pyruvate to dihydrodipicolinate (DHDP). However, it was shown in E.coli that the product of the enzymatic reaction is not dihydrodipicolinate but in fact (4S)-4-hydroxy-2,3,4,5-tetrahydro-(2S)-dipicolinic acid (HTPA), and that the consecutive dehydration reaction leading to DHDP is not spontaneous but catalyzed by DapB.</text>
</comment>
<evidence type="ECO:0000255" key="1">
    <source>
        <dbReference type="HAMAP-Rule" id="MF_00418"/>
    </source>
</evidence>
<evidence type="ECO:0000305" key="2"/>
<reference key="1">
    <citation type="submission" date="2005-08" db="EMBL/GenBank/DDBJ databases">
        <title>Complete sequence of Synechococcus sp. CC9902.</title>
        <authorList>
            <person name="Copeland A."/>
            <person name="Lucas S."/>
            <person name="Lapidus A."/>
            <person name="Barry K."/>
            <person name="Detter J.C."/>
            <person name="Glavina T."/>
            <person name="Hammon N."/>
            <person name="Israni S."/>
            <person name="Pitluck S."/>
            <person name="Martinez M."/>
            <person name="Schmutz J."/>
            <person name="Larimer F."/>
            <person name="Land M."/>
            <person name="Kyrpides N."/>
            <person name="Ivanova N."/>
            <person name="Richardson P."/>
        </authorList>
    </citation>
    <scope>NUCLEOTIDE SEQUENCE [LARGE SCALE GENOMIC DNA]</scope>
    <source>
        <strain>CC9902</strain>
    </source>
</reference>
<keyword id="KW-0028">Amino-acid biosynthesis</keyword>
<keyword id="KW-0963">Cytoplasm</keyword>
<keyword id="KW-0220">Diaminopimelate biosynthesis</keyword>
<keyword id="KW-0456">Lyase</keyword>
<keyword id="KW-0457">Lysine biosynthesis</keyword>
<keyword id="KW-1185">Reference proteome</keyword>
<keyword id="KW-0704">Schiff base</keyword>
<feature type="chain" id="PRO_1000050289" description="4-hydroxy-tetrahydrodipicolinate synthase">
    <location>
        <begin position="1"/>
        <end position="302"/>
    </location>
</feature>
<feature type="active site" description="Proton donor/acceptor" evidence="1">
    <location>
        <position position="144"/>
    </location>
</feature>
<feature type="active site" description="Schiff-base intermediate with substrate" evidence="1">
    <location>
        <position position="172"/>
    </location>
</feature>
<feature type="binding site" evidence="1">
    <location>
        <position position="55"/>
    </location>
    <ligand>
        <name>pyruvate</name>
        <dbReference type="ChEBI" id="CHEBI:15361"/>
    </ligand>
</feature>
<feature type="binding site" evidence="1">
    <location>
        <position position="214"/>
    </location>
    <ligand>
        <name>pyruvate</name>
        <dbReference type="ChEBI" id="CHEBI:15361"/>
    </ligand>
</feature>
<feature type="site" description="Part of a proton relay during catalysis" evidence="1">
    <location>
        <position position="54"/>
    </location>
</feature>
<feature type="site" description="Part of a proton relay during catalysis" evidence="1">
    <location>
        <position position="117"/>
    </location>
</feature>
<name>DAPA_SYNS9</name>